<gene>
    <name type="primary">Ugdh</name>
</gene>
<dbReference type="EC" id="1.1.1.22" evidence="3"/>
<dbReference type="EMBL" id="AF061017">
    <property type="protein sequence ID" value="AAC36096.1"/>
    <property type="molecule type" value="mRNA"/>
</dbReference>
<dbReference type="EMBL" id="BC006749">
    <property type="protein sequence ID" value="AAH06749.1"/>
    <property type="molecule type" value="mRNA"/>
</dbReference>
<dbReference type="CCDS" id="CCDS19308.1"/>
<dbReference type="RefSeq" id="NP_033492.1">
    <property type="nucleotide sequence ID" value="NM_009466.2"/>
</dbReference>
<dbReference type="RefSeq" id="XP_006503925.1">
    <property type="nucleotide sequence ID" value="XM_006503862.4"/>
</dbReference>
<dbReference type="SMR" id="O70475"/>
<dbReference type="BioGRID" id="204433">
    <property type="interactions" value="23"/>
</dbReference>
<dbReference type="FunCoup" id="O70475">
    <property type="interactions" value="2684"/>
</dbReference>
<dbReference type="IntAct" id="O70475">
    <property type="interactions" value="1"/>
</dbReference>
<dbReference type="STRING" id="10090.ENSMUSP00000031103"/>
<dbReference type="GlyGen" id="O70475">
    <property type="glycosylation" value="2 sites, 1 O-linked glycan (1 site)"/>
</dbReference>
<dbReference type="iPTMnet" id="O70475"/>
<dbReference type="PhosphoSitePlus" id="O70475"/>
<dbReference type="SwissPalm" id="O70475"/>
<dbReference type="jPOST" id="O70475"/>
<dbReference type="PaxDb" id="10090-ENSMUSP00000031103"/>
<dbReference type="PeptideAtlas" id="O70475"/>
<dbReference type="ProteomicsDB" id="298195"/>
<dbReference type="Pumba" id="O70475"/>
<dbReference type="Antibodypedia" id="23464">
    <property type="antibodies" value="324 antibodies from 31 providers"/>
</dbReference>
<dbReference type="DNASU" id="22235"/>
<dbReference type="Ensembl" id="ENSMUST00000031103.14">
    <property type="protein sequence ID" value="ENSMUSP00000031103.8"/>
    <property type="gene ID" value="ENSMUSG00000029201.15"/>
</dbReference>
<dbReference type="GeneID" id="22235"/>
<dbReference type="KEGG" id="mmu:22235"/>
<dbReference type="UCSC" id="uc008xns.1">
    <property type="organism name" value="mouse"/>
</dbReference>
<dbReference type="AGR" id="MGI:1306785"/>
<dbReference type="CTD" id="7358"/>
<dbReference type="MGI" id="MGI:1306785">
    <property type="gene designation" value="Ugdh"/>
</dbReference>
<dbReference type="VEuPathDB" id="HostDB:ENSMUSG00000029201"/>
<dbReference type="eggNOG" id="KOG2666">
    <property type="taxonomic scope" value="Eukaryota"/>
</dbReference>
<dbReference type="GeneTree" id="ENSGT00390000015355"/>
<dbReference type="HOGENOM" id="CLU_023810_7_2_1"/>
<dbReference type="InParanoid" id="O70475"/>
<dbReference type="OMA" id="CFIAVGT"/>
<dbReference type="OrthoDB" id="5059218at2759"/>
<dbReference type="PhylomeDB" id="O70475"/>
<dbReference type="TreeFam" id="TF105671"/>
<dbReference type="BRENDA" id="1.1.1.22">
    <property type="organism ID" value="3474"/>
</dbReference>
<dbReference type="Reactome" id="R-MMU-173599">
    <property type="pathway name" value="Formation of the active cofactor, UDP-glucuronate"/>
</dbReference>
<dbReference type="UniPathway" id="UPA00038">
    <property type="reaction ID" value="UER00491"/>
</dbReference>
<dbReference type="BioGRID-ORCS" id="22235">
    <property type="hits" value="5 hits in 78 CRISPR screens"/>
</dbReference>
<dbReference type="ChiTaRS" id="Ugdh">
    <property type="organism name" value="mouse"/>
</dbReference>
<dbReference type="PRO" id="PR:O70475"/>
<dbReference type="Proteomes" id="UP000000589">
    <property type="component" value="Chromosome 5"/>
</dbReference>
<dbReference type="RNAct" id="O70475">
    <property type="molecule type" value="protein"/>
</dbReference>
<dbReference type="Bgee" id="ENSMUSG00000029201">
    <property type="expression patterns" value="Expressed in olfactory epithelium and 149 other cell types or tissues"/>
</dbReference>
<dbReference type="ExpressionAtlas" id="O70475">
    <property type="expression patterns" value="baseline and differential"/>
</dbReference>
<dbReference type="GO" id="GO:0005829">
    <property type="term" value="C:cytosol"/>
    <property type="evidence" value="ECO:0000266"/>
    <property type="project" value="MGI"/>
</dbReference>
<dbReference type="GO" id="GO:0005654">
    <property type="term" value="C:nucleoplasm"/>
    <property type="evidence" value="ECO:0007669"/>
    <property type="project" value="Ensembl"/>
</dbReference>
<dbReference type="GO" id="GO:0042802">
    <property type="term" value="F:identical protein binding"/>
    <property type="evidence" value="ECO:0007669"/>
    <property type="project" value="Ensembl"/>
</dbReference>
<dbReference type="GO" id="GO:0051287">
    <property type="term" value="F:NAD binding"/>
    <property type="evidence" value="ECO:0007669"/>
    <property type="project" value="InterPro"/>
</dbReference>
<dbReference type="GO" id="GO:0003979">
    <property type="term" value="F:UDP-glucose 6-dehydrogenase activity"/>
    <property type="evidence" value="ECO:0000314"/>
    <property type="project" value="CACAO"/>
</dbReference>
<dbReference type="GO" id="GO:0050650">
    <property type="term" value="P:chondroitin sulfate proteoglycan biosynthetic process"/>
    <property type="evidence" value="ECO:0000315"/>
    <property type="project" value="UniProtKB"/>
</dbReference>
<dbReference type="GO" id="GO:0001702">
    <property type="term" value="P:gastrulation with mouth forming second"/>
    <property type="evidence" value="ECO:0000315"/>
    <property type="project" value="UniProtKB"/>
</dbReference>
<dbReference type="GO" id="GO:0015012">
    <property type="term" value="P:heparan sulfate proteoglycan biosynthetic process"/>
    <property type="evidence" value="ECO:0000315"/>
    <property type="project" value="UniProtKB"/>
</dbReference>
<dbReference type="GO" id="GO:0048666">
    <property type="term" value="P:neuron development"/>
    <property type="evidence" value="ECO:0000250"/>
    <property type="project" value="UniProtKB"/>
</dbReference>
<dbReference type="GO" id="GO:0034214">
    <property type="term" value="P:protein hexamerization"/>
    <property type="evidence" value="ECO:0000250"/>
    <property type="project" value="UniProtKB"/>
</dbReference>
<dbReference type="GO" id="GO:0006065">
    <property type="term" value="P:UDP-glucuronate biosynthetic process"/>
    <property type="evidence" value="ECO:0000315"/>
    <property type="project" value="MGI"/>
</dbReference>
<dbReference type="FunFam" id="1.20.5.100:FF:000001">
    <property type="entry name" value="UDP-glucose 6-dehydrogenase"/>
    <property type="match status" value="1"/>
</dbReference>
<dbReference type="FunFam" id="3.40.50.720:FF:000032">
    <property type="entry name" value="UDP-glucose 6-dehydrogenase"/>
    <property type="match status" value="1"/>
</dbReference>
<dbReference type="FunFam" id="3.40.50.720:FF:000114">
    <property type="entry name" value="UDP-glucose 6-dehydrogenase"/>
    <property type="match status" value="1"/>
</dbReference>
<dbReference type="Gene3D" id="1.20.5.100">
    <property type="entry name" value="Cytochrome c1, transmembrane anchor, C-terminal"/>
    <property type="match status" value="1"/>
</dbReference>
<dbReference type="Gene3D" id="3.40.50.720">
    <property type="entry name" value="NAD(P)-binding Rossmann-like Domain"/>
    <property type="match status" value="2"/>
</dbReference>
<dbReference type="InterPro" id="IPR008927">
    <property type="entry name" value="6-PGluconate_DH-like_C_sf"/>
</dbReference>
<dbReference type="InterPro" id="IPR036291">
    <property type="entry name" value="NAD(P)-bd_dom_sf"/>
</dbReference>
<dbReference type="InterPro" id="IPR017476">
    <property type="entry name" value="UDP-Glc/GDP-Man"/>
</dbReference>
<dbReference type="InterPro" id="IPR014027">
    <property type="entry name" value="UDP-Glc/GDP-Man_DH_C"/>
</dbReference>
<dbReference type="InterPro" id="IPR036220">
    <property type="entry name" value="UDP-Glc/GDP-Man_DH_C_sf"/>
</dbReference>
<dbReference type="InterPro" id="IPR014026">
    <property type="entry name" value="UDP-Glc/GDP-Man_DH_dimer"/>
</dbReference>
<dbReference type="InterPro" id="IPR001732">
    <property type="entry name" value="UDP-Glc/GDP-Man_DH_N"/>
</dbReference>
<dbReference type="InterPro" id="IPR028356">
    <property type="entry name" value="UDPglc_DH_euk"/>
</dbReference>
<dbReference type="NCBIfam" id="TIGR03026">
    <property type="entry name" value="NDP-sugDHase"/>
    <property type="match status" value="1"/>
</dbReference>
<dbReference type="PANTHER" id="PTHR11374:SF59">
    <property type="entry name" value="UDP-GLUCOSE 6-DEHYDROGENASE"/>
    <property type="match status" value="1"/>
</dbReference>
<dbReference type="PANTHER" id="PTHR11374">
    <property type="entry name" value="UDP-GLUCOSE DEHYDROGENASE/UDP-MANNAC DEHYDROGENASE"/>
    <property type="match status" value="1"/>
</dbReference>
<dbReference type="Pfam" id="PF00984">
    <property type="entry name" value="UDPG_MGDP_dh"/>
    <property type="match status" value="1"/>
</dbReference>
<dbReference type="Pfam" id="PF03720">
    <property type="entry name" value="UDPG_MGDP_dh_C"/>
    <property type="match status" value="1"/>
</dbReference>
<dbReference type="Pfam" id="PF03721">
    <property type="entry name" value="UDPG_MGDP_dh_N"/>
    <property type="match status" value="1"/>
</dbReference>
<dbReference type="PIRSF" id="PIRSF500133">
    <property type="entry name" value="UDPglc_DH_euk"/>
    <property type="match status" value="1"/>
</dbReference>
<dbReference type="PIRSF" id="PIRSF000124">
    <property type="entry name" value="UDPglc_GDPman_dh"/>
    <property type="match status" value="1"/>
</dbReference>
<dbReference type="SMART" id="SM00984">
    <property type="entry name" value="UDPG_MGDP_dh_C"/>
    <property type="match status" value="1"/>
</dbReference>
<dbReference type="SUPFAM" id="SSF48179">
    <property type="entry name" value="6-phosphogluconate dehydrogenase C-terminal domain-like"/>
    <property type="match status" value="1"/>
</dbReference>
<dbReference type="SUPFAM" id="SSF51735">
    <property type="entry name" value="NAD(P)-binding Rossmann-fold domains"/>
    <property type="match status" value="1"/>
</dbReference>
<dbReference type="SUPFAM" id="SSF52413">
    <property type="entry name" value="UDP-glucose/GDP-mannose dehydrogenase C-terminal domain"/>
    <property type="match status" value="1"/>
</dbReference>
<feature type="chain" id="PRO_0000074061" description="UDP-glucose 6-dehydrogenase">
    <location>
        <begin position="1"/>
        <end position="493"/>
    </location>
</feature>
<feature type="region of interest" description="Disordered" evidence="1">
    <location>
        <begin position="88"/>
        <end position="110"/>
    </location>
</feature>
<feature type="region of interest" description="Allosteric switch region" evidence="1">
    <location>
        <begin position="129"/>
        <end position="135"/>
    </location>
</feature>
<feature type="region of interest" description="Important for formation of active hexamer structure" evidence="1">
    <location>
        <begin position="321"/>
        <end position="325"/>
    </location>
</feature>
<feature type="region of interest" description="Disordered" evidence="1">
    <location>
        <begin position="466"/>
        <end position="493"/>
    </location>
</feature>
<feature type="active site" description="Proton donor/acceptor" evidence="1">
    <location>
        <position position="161"/>
    </location>
</feature>
<feature type="active site" description="Proton donor/acceptor" evidence="1">
    <location>
        <position position="220"/>
    </location>
</feature>
<feature type="active site" description="Nucleophile" evidence="1">
    <location>
        <position position="276"/>
    </location>
</feature>
<feature type="binding site" evidence="1">
    <location>
        <begin position="11"/>
        <end position="16"/>
    </location>
    <ligand>
        <name>NAD(+)</name>
        <dbReference type="ChEBI" id="CHEBI:57540"/>
    </ligand>
</feature>
<feature type="binding site" evidence="1">
    <location>
        <position position="36"/>
    </location>
    <ligand>
        <name>NAD(+)</name>
        <dbReference type="ChEBI" id="CHEBI:57540"/>
    </ligand>
</feature>
<feature type="binding site" evidence="1">
    <location>
        <position position="41"/>
    </location>
    <ligand>
        <name>NAD(+)</name>
        <dbReference type="ChEBI" id="CHEBI:57540"/>
    </ligand>
</feature>
<feature type="binding site" evidence="1">
    <location>
        <begin position="89"/>
        <end position="93"/>
    </location>
    <ligand>
        <name>NAD(+)</name>
        <dbReference type="ChEBI" id="CHEBI:57540"/>
    </ligand>
</feature>
<feature type="binding site" evidence="1">
    <location>
        <begin position="130"/>
        <end position="132"/>
    </location>
    <ligand>
        <name>NAD(+)</name>
        <dbReference type="ChEBI" id="CHEBI:57540"/>
    </ligand>
</feature>
<feature type="binding site" evidence="1">
    <location>
        <begin position="161"/>
        <end position="165"/>
    </location>
    <ligand>
        <name>substrate</name>
    </ligand>
</feature>
<feature type="binding site" evidence="1">
    <location>
        <position position="165"/>
    </location>
    <ligand>
        <name>NAD(+)</name>
        <dbReference type="ChEBI" id="CHEBI:57540"/>
    </ligand>
</feature>
<feature type="binding site" evidence="1">
    <location>
        <begin position="220"/>
        <end position="224"/>
    </location>
    <ligand>
        <name>substrate</name>
    </ligand>
</feature>
<feature type="binding site" evidence="1">
    <location>
        <position position="260"/>
    </location>
    <ligand>
        <name>substrate</name>
    </ligand>
</feature>
<feature type="binding site" evidence="1">
    <location>
        <begin position="267"/>
        <end position="273"/>
    </location>
    <ligand>
        <name>substrate</name>
    </ligand>
</feature>
<feature type="binding site" evidence="1">
    <location>
        <begin position="276"/>
        <end position="279"/>
    </location>
    <ligand>
        <name>NAD(+)</name>
        <dbReference type="ChEBI" id="CHEBI:57540"/>
    </ligand>
</feature>
<feature type="binding site" evidence="1">
    <location>
        <begin position="338"/>
        <end position="339"/>
    </location>
    <ligand>
        <name>substrate</name>
    </ligand>
</feature>
<feature type="binding site" evidence="1">
    <location>
        <position position="346"/>
    </location>
    <ligand>
        <name>NAD(+)</name>
        <dbReference type="ChEBI" id="CHEBI:57540"/>
    </ligand>
</feature>
<feature type="binding site" evidence="1">
    <location>
        <position position="442"/>
    </location>
    <ligand>
        <name>substrate</name>
    </ligand>
</feature>
<feature type="modified residue" description="N6-acetyllysine" evidence="8">
    <location>
        <position position="107"/>
    </location>
</feature>
<feature type="modified residue" description="Phosphothreonine" evidence="5 6 7">
    <location>
        <position position="474"/>
    </location>
</feature>
<feature type="mutagenesis site" description="In lzme; causes arrest of embryonic development during gastrulation due to chondroitin sulfate and heparan sulfate deficiency, impaired FGF signaling and impaired migration of mesoderm and endoderm." evidence="2">
    <original>Q</original>
    <variation>QFQ</variation>
    <location>
        <position position="302"/>
    </location>
</feature>
<name>UGDH_MOUSE</name>
<proteinExistence type="evidence at protein level"/>
<reference key="1">
    <citation type="journal article" date="1998" name="J. Biol. Chem.">
        <title>Molecular cloning and characterization of the human and mouse UDP-glucose dehydrogenase genes.</title>
        <authorList>
            <person name="Spicer A.P."/>
            <person name="Kaback L.A."/>
            <person name="Smith T.J."/>
            <person name="Seldin M.F."/>
        </authorList>
    </citation>
    <scope>NUCLEOTIDE SEQUENCE [MRNA]</scope>
    <scope>CATALYTIC ACTIVITY</scope>
    <scope>FUNCTION</scope>
    <scope>PATHWAY</scope>
    <scope>ACTIVITY REGULATION</scope>
    <scope>DEVELOPMENTAL STAGE</scope>
</reference>
<reference key="2">
    <citation type="journal article" date="2004" name="Genome Res.">
        <title>The status, quality, and expansion of the NIH full-length cDNA project: the Mammalian Gene Collection (MGC).</title>
        <authorList>
            <consortium name="The MGC Project Team"/>
        </authorList>
    </citation>
    <scope>NUCLEOTIDE SEQUENCE [LARGE SCALE MRNA]</scope>
    <source>
        <strain>FVB/N</strain>
        <tissue>Mammary gland</tissue>
    </source>
</reference>
<reference key="3">
    <citation type="journal article" date="2003" name="Cell">
        <title>Essential role of glycosaminoglycans in Fgf signaling during mouse gastrulation.</title>
        <authorList>
            <person name="Garcia-Garcia M.J."/>
            <person name="Anderson K.V."/>
        </authorList>
    </citation>
    <scope>FUNCTION</scope>
    <scope>MUTAGENESIS OF GLN-302</scope>
    <scope>DEVELOPMENTAL STAGE</scope>
</reference>
<reference key="4">
    <citation type="journal article" date="2007" name="Proc. Natl. Acad. Sci. U.S.A.">
        <title>Large-scale phosphorylation analysis of mouse liver.</title>
        <authorList>
            <person name="Villen J."/>
            <person name="Beausoleil S.A."/>
            <person name="Gerber S.A."/>
            <person name="Gygi S.P."/>
        </authorList>
    </citation>
    <scope>PHOSPHORYLATION [LARGE SCALE ANALYSIS] AT THR-474</scope>
    <scope>IDENTIFICATION BY MASS SPECTROMETRY [LARGE SCALE ANALYSIS]</scope>
    <source>
        <tissue>Liver</tissue>
    </source>
</reference>
<reference key="5">
    <citation type="journal article" date="2008" name="J. Proteome Res.">
        <title>Specific phosphopeptide enrichment with immobilized titanium ion affinity chromatography adsorbent for phosphoproteome analysis.</title>
        <authorList>
            <person name="Zhou H."/>
            <person name="Ye M."/>
            <person name="Dong J."/>
            <person name="Han G."/>
            <person name="Jiang X."/>
            <person name="Wu R."/>
            <person name="Zou H."/>
        </authorList>
    </citation>
    <scope>IDENTIFICATION BY MASS SPECTROMETRY [LARGE SCALE ANALYSIS]</scope>
    <source>
        <tissue>Liver</tissue>
    </source>
</reference>
<reference key="6">
    <citation type="journal article" date="2009" name="Mol. Cell. Proteomics">
        <title>Large scale localization of protein phosphorylation by use of electron capture dissociation mass spectrometry.</title>
        <authorList>
            <person name="Sweet S.M."/>
            <person name="Bailey C.M."/>
            <person name="Cunningham D.L."/>
            <person name="Heath J.K."/>
            <person name="Cooper H.J."/>
        </authorList>
    </citation>
    <scope>PHOSPHORYLATION [LARGE SCALE ANALYSIS] AT THR-474</scope>
    <scope>IDENTIFICATION BY MASS SPECTROMETRY [LARGE SCALE ANALYSIS]</scope>
    <source>
        <tissue>Embryonic fibroblast</tissue>
    </source>
</reference>
<reference key="7">
    <citation type="journal article" date="2010" name="Cell">
        <title>A tissue-specific atlas of mouse protein phosphorylation and expression.</title>
        <authorList>
            <person name="Huttlin E.L."/>
            <person name="Jedrychowski M.P."/>
            <person name="Elias J.E."/>
            <person name="Goswami T."/>
            <person name="Rad R."/>
            <person name="Beausoleil S.A."/>
            <person name="Villen J."/>
            <person name="Haas W."/>
            <person name="Sowa M.E."/>
            <person name="Gygi S.P."/>
        </authorList>
    </citation>
    <scope>PHOSPHORYLATION [LARGE SCALE ANALYSIS] AT THR-474</scope>
    <scope>IDENTIFICATION BY MASS SPECTROMETRY [LARGE SCALE ANALYSIS]</scope>
    <source>
        <tissue>Brown adipose tissue</tissue>
        <tissue>Heart</tissue>
        <tissue>Kidney</tissue>
        <tissue>Liver</tissue>
        <tissue>Lung</tissue>
        <tissue>Pancreas</tissue>
        <tissue>Spleen</tissue>
        <tissue>Testis</tissue>
    </source>
</reference>
<reference key="8">
    <citation type="journal article" date="2013" name="Mol. Cell">
        <title>SIRT5-mediated lysine desuccinylation impacts diverse metabolic pathways.</title>
        <authorList>
            <person name="Park J."/>
            <person name="Chen Y."/>
            <person name="Tishkoff D.X."/>
            <person name="Peng C."/>
            <person name="Tan M."/>
            <person name="Dai L."/>
            <person name="Xie Z."/>
            <person name="Zhang Y."/>
            <person name="Zwaans B.M."/>
            <person name="Skinner M.E."/>
            <person name="Lombard D.B."/>
            <person name="Zhao Y."/>
        </authorList>
    </citation>
    <scope>ACETYLATION [LARGE SCALE ANALYSIS] AT LYS-107</scope>
    <scope>IDENTIFICATION BY MASS SPECTROMETRY [LARGE SCALE ANALYSIS]</scope>
    <source>
        <tissue>Embryonic fibroblast</tissue>
    </source>
</reference>
<sequence length="493" mass="54832">MVEIKKICCIGAGYVGGPTCSVIAHMCPEIRVTVVDVNEARINAWNSPTLPIYEPGLKEVVESCRGKNLFFSTNIDDAIREADLVFISVNTPTKTYGMGKGRAADLKYIEACARRIVQNSNGYKIVTEKSTVPVRAAESIRRIFDANTKPNLNLQVLSNPEFLAEGTAIKDLKNPDRVLIGGDETPEGQKAVRALCAVYEHWVPKEKILTTNTWSSELSKLAANAFLAQRISSINSISALCEATGADVEEVATAIGMDQRIGNKFLKASVGFGGSCFQKDVLNLVYLCEALNLPEVARYWQQVIDMNDYQRRRFASRIIDSLFNTVTDKKIAILGFAFKKDTGDTRESSSIYISKYLMDEGAHLHIYDPKVPREQIVVDLSHPGVSADDQVSRLVTISKDPYEACDGAHALVICTEWDMFKELDYERIHKKMLKPAFIFDGRRVLDGLHSELQTIGFQIETIGKKVSSKRIPYTPGEIPKFSLQDPPNKKPKV</sequence>
<evidence type="ECO:0000250" key="1">
    <source>
        <dbReference type="UniProtKB" id="O60701"/>
    </source>
</evidence>
<evidence type="ECO:0000269" key="2">
    <source>
    </source>
</evidence>
<evidence type="ECO:0000269" key="3">
    <source>
    </source>
</evidence>
<evidence type="ECO:0000305" key="4"/>
<evidence type="ECO:0007744" key="5">
    <source>
    </source>
</evidence>
<evidence type="ECO:0007744" key="6">
    <source>
    </source>
</evidence>
<evidence type="ECO:0007744" key="7">
    <source>
    </source>
</evidence>
<evidence type="ECO:0007744" key="8">
    <source>
    </source>
</evidence>
<accession>O70475</accession>
<keyword id="KW-0007">Acetylation</keyword>
<keyword id="KW-0021">Allosteric enzyme</keyword>
<keyword id="KW-0119">Carbohydrate metabolism</keyword>
<keyword id="KW-0520">NAD</keyword>
<keyword id="KW-0560">Oxidoreductase</keyword>
<keyword id="KW-0597">Phosphoprotein</keyword>
<keyword id="KW-1185">Reference proteome</keyword>
<organism>
    <name type="scientific">Mus musculus</name>
    <name type="common">Mouse</name>
    <dbReference type="NCBI Taxonomy" id="10090"/>
    <lineage>
        <taxon>Eukaryota</taxon>
        <taxon>Metazoa</taxon>
        <taxon>Chordata</taxon>
        <taxon>Craniata</taxon>
        <taxon>Vertebrata</taxon>
        <taxon>Euteleostomi</taxon>
        <taxon>Mammalia</taxon>
        <taxon>Eutheria</taxon>
        <taxon>Euarchontoglires</taxon>
        <taxon>Glires</taxon>
        <taxon>Rodentia</taxon>
        <taxon>Myomorpha</taxon>
        <taxon>Muroidea</taxon>
        <taxon>Muridae</taxon>
        <taxon>Murinae</taxon>
        <taxon>Mus</taxon>
        <taxon>Mus</taxon>
    </lineage>
</organism>
<comment type="function">
    <text evidence="1 2 3">Catalyzes the formation of UDP-alpha-D-glucuronate, a constituent of complex glycosaminoglycans (PubMed:9737970). Required for the biosynthesis of chondroitin sulfate and heparan sulfate. Required for embryonic development via its role in the biosynthesis of glycosaminoglycans (PubMed:14505572). Required for proper brain and neuronal development (By similarity).</text>
</comment>
<comment type="catalytic activity">
    <reaction evidence="3">
        <text>UDP-alpha-D-glucose + 2 NAD(+) + H2O = UDP-alpha-D-glucuronate + 2 NADH + 3 H(+)</text>
        <dbReference type="Rhea" id="RHEA:23596"/>
        <dbReference type="ChEBI" id="CHEBI:15377"/>
        <dbReference type="ChEBI" id="CHEBI:15378"/>
        <dbReference type="ChEBI" id="CHEBI:57540"/>
        <dbReference type="ChEBI" id="CHEBI:57945"/>
        <dbReference type="ChEBI" id="CHEBI:58052"/>
        <dbReference type="ChEBI" id="CHEBI:58885"/>
        <dbReference type="EC" id="1.1.1.22"/>
    </reaction>
</comment>
<comment type="activity regulation">
    <text evidence="1 3">UDP-alpha-D-xylose (UDX) acts as a feedback inhibitor (PubMed:9737970). It binds at the same site as the substrate, but functions as allosteric inhibitor by triggering a conformation change that disrupts the active hexameric ring structure and gives rise to an inactive, horseshoe-shaped hexamer (By similarity).</text>
</comment>
<comment type="pathway">
    <text evidence="3">Nucleotide-sugar biosynthesis; UDP-alpha-D-glucuronate biosynthesis; UDP-alpha-D-glucuronate from UDP-alpha-D-glucose: step 1/1.</text>
</comment>
<comment type="subunit">
    <text evidence="1">Homohexamer.</text>
</comment>
<comment type="developmental stage">
    <text evidence="2 3">Detected in embryos from 7.5 to 17.5 dpc (PubMed:14505572, PubMed:9737970). Detected in the epiblast at 7.5 dpc, in the cardiac region and tail bud at 8.5 dpc, in otic vesicle and branchial arches at 9.5 dpc, and in forebrain, branchial arches and limb buds at 10.5 dpc (PubMed:14505572).</text>
</comment>
<comment type="domain">
    <text evidence="1">The protein goes through several conformation states during the reaction cycle, giving rise to hysteresis. In the initial state, the ligand-free protein is in an inactive conformation (E*). Substrate binding triggers a change to the active conformation (E). UDP-xylose binding triggers the transition to a distinct, inhibited conformation. The presence of an intrinsically disordered C-terminus promotes a more dynamic protein structure and favors a conformation with high affinity for UPD-xylose.</text>
</comment>
<comment type="domain">
    <text evidence="1">The allosteric switch region moves by about 5 Angstroms when UDP-xylose is bound, and occupies part of the UDP-glucose binding site. At the same time it promotes domain movements that disrupt the active hexameric ring structure and lead to the formation of a horseshoe-shaped, inactive hexamer.</text>
</comment>
<comment type="similarity">
    <text evidence="4">Belongs to the UDP-glucose/GDP-mannose dehydrogenase family.</text>
</comment>
<protein>
    <recommendedName>
        <fullName>UDP-glucose 6-dehydrogenase</fullName>
        <shortName>UDP-Glc dehydrogenase</shortName>
        <shortName>UDP-GlcDH</shortName>
        <shortName>UDPGDH</shortName>
        <ecNumber evidence="3">1.1.1.22</ecNumber>
    </recommendedName>
</protein>